<gene>
    <name evidence="1" type="primary">mscL</name>
    <name type="ordered locus">AB57_3335</name>
</gene>
<dbReference type="EMBL" id="CP001182">
    <property type="protein sequence ID" value="ACJ41911.1"/>
    <property type="molecule type" value="Genomic_DNA"/>
</dbReference>
<dbReference type="RefSeq" id="WP_000022555.1">
    <property type="nucleotide sequence ID" value="NC_011586.2"/>
</dbReference>
<dbReference type="SMR" id="B7I868"/>
<dbReference type="GeneID" id="92895113"/>
<dbReference type="KEGG" id="abn:AB57_3335"/>
<dbReference type="HOGENOM" id="CLU_095787_0_1_6"/>
<dbReference type="Proteomes" id="UP000007094">
    <property type="component" value="Chromosome"/>
</dbReference>
<dbReference type="GO" id="GO:0005886">
    <property type="term" value="C:plasma membrane"/>
    <property type="evidence" value="ECO:0007669"/>
    <property type="project" value="UniProtKB-SubCell"/>
</dbReference>
<dbReference type="GO" id="GO:0008381">
    <property type="term" value="F:mechanosensitive monoatomic ion channel activity"/>
    <property type="evidence" value="ECO:0007669"/>
    <property type="project" value="UniProtKB-UniRule"/>
</dbReference>
<dbReference type="Gene3D" id="1.10.1200.120">
    <property type="entry name" value="Large-conductance mechanosensitive channel, MscL, domain 1"/>
    <property type="match status" value="1"/>
</dbReference>
<dbReference type="HAMAP" id="MF_00115">
    <property type="entry name" value="MscL"/>
    <property type="match status" value="1"/>
</dbReference>
<dbReference type="InterPro" id="IPR019823">
    <property type="entry name" value="Mechanosensitive_channel_CS"/>
</dbReference>
<dbReference type="InterPro" id="IPR001185">
    <property type="entry name" value="MS_channel"/>
</dbReference>
<dbReference type="InterPro" id="IPR037673">
    <property type="entry name" value="MSC/AndL"/>
</dbReference>
<dbReference type="InterPro" id="IPR036019">
    <property type="entry name" value="MscL_channel"/>
</dbReference>
<dbReference type="NCBIfam" id="TIGR00220">
    <property type="entry name" value="mscL"/>
    <property type="match status" value="1"/>
</dbReference>
<dbReference type="NCBIfam" id="NF001843">
    <property type="entry name" value="PRK00567.1-4"/>
    <property type="match status" value="1"/>
</dbReference>
<dbReference type="NCBIfam" id="NF010557">
    <property type="entry name" value="PRK13952.1"/>
    <property type="match status" value="1"/>
</dbReference>
<dbReference type="PANTHER" id="PTHR30266:SF2">
    <property type="entry name" value="LARGE-CONDUCTANCE MECHANOSENSITIVE CHANNEL"/>
    <property type="match status" value="1"/>
</dbReference>
<dbReference type="PANTHER" id="PTHR30266">
    <property type="entry name" value="MECHANOSENSITIVE CHANNEL MSCL"/>
    <property type="match status" value="1"/>
</dbReference>
<dbReference type="Pfam" id="PF01741">
    <property type="entry name" value="MscL"/>
    <property type="match status" value="1"/>
</dbReference>
<dbReference type="PRINTS" id="PR01264">
    <property type="entry name" value="MECHCHANNEL"/>
</dbReference>
<dbReference type="SUPFAM" id="SSF81330">
    <property type="entry name" value="Gated mechanosensitive channel"/>
    <property type="match status" value="1"/>
</dbReference>
<dbReference type="PROSITE" id="PS01327">
    <property type="entry name" value="MSCL"/>
    <property type="match status" value="1"/>
</dbReference>
<feature type="chain" id="PRO_1000117547" description="Large-conductance mechanosensitive channel">
    <location>
        <begin position="1"/>
        <end position="143"/>
    </location>
</feature>
<feature type="transmembrane region" description="Helical" evidence="1">
    <location>
        <begin position="10"/>
        <end position="30"/>
    </location>
</feature>
<feature type="transmembrane region" description="Helical" evidence="1">
    <location>
        <begin position="40"/>
        <end position="60"/>
    </location>
</feature>
<feature type="transmembrane region" description="Helical" evidence="1">
    <location>
        <begin position="86"/>
        <end position="106"/>
    </location>
</feature>
<comment type="function">
    <text evidence="1">Channel that opens in response to stretch forces in the membrane lipid bilayer. May participate in the regulation of osmotic pressure changes within the cell.</text>
</comment>
<comment type="subunit">
    <text evidence="1">Homopentamer.</text>
</comment>
<comment type="subcellular location">
    <subcellularLocation>
        <location evidence="1">Cell inner membrane</location>
        <topology evidence="1">Multi-pass membrane protein</topology>
    </subcellularLocation>
</comment>
<comment type="similarity">
    <text evidence="1">Belongs to the MscL family.</text>
</comment>
<organism>
    <name type="scientific">Acinetobacter baumannii (strain AB0057)</name>
    <dbReference type="NCBI Taxonomy" id="480119"/>
    <lineage>
        <taxon>Bacteria</taxon>
        <taxon>Pseudomonadati</taxon>
        <taxon>Pseudomonadota</taxon>
        <taxon>Gammaproteobacteria</taxon>
        <taxon>Moraxellales</taxon>
        <taxon>Moraxellaceae</taxon>
        <taxon>Acinetobacter</taxon>
        <taxon>Acinetobacter calcoaceticus/baumannii complex</taxon>
    </lineage>
</organism>
<evidence type="ECO:0000255" key="1">
    <source>
        <dbReference type="HAMAP-Rule" id="MF_00115"/>
    </source>
</evidence>
<protein>
    <recommendedName>
        <fullName evidence="1">Large-conductance mechanosensitive channel</fullName>
    </recommendedName>
</protein>
<sequence>MSIIQEFKEFAIKGNMMDLAIGVIIGGAFGKIVDSLVKDIIMPLITVITGGGVDFSQKFIVLGANPNNLQSLDALQKAGINVLTYGNFLTILINFLILAWVVFLMVKLLNKLRRDKNEPEAPAATPEDIQLLREIRDELKKQA</sequence>
<reference key="1">
    <citation type="journal article" date="2008" name="J. Bacteriol.">
        <title>Comparative genome sequence analysis of multidrug-resistant Acinetobacter baumannii.</title>
        <authorList>
            <person name="Adams M.D."/>
            <person name="Goglin K."/>
            <person name="Molyneaux N."/>
            <person name="Hujer K.M."/>
            <person name="Lavender H."/>
            <person name="Jamison J.J."/>
            <person name="MacDonald I.J."/>
            <person name="Martin K.M."/>
            <person name="Russo T."/>
            <person name="Campagnari A.A."/>
            <person name="Hujer A.M."/>
            <person name="Bonomo R.A."/>
            <person name="Gill S.R."/>
        </authorList>
    </citation>
    <scope>NUCLEOTIDE SEQUENCE [LARGE SCALE GENOMIC DNA]</scope>
    <source>
        <strain>AB0057</strain>
    </source>
</reference>
<keyword id="KW-0997">Cell inner membrane</keyword>
<keyword id="KW-1003">Cell membrane</keyword>
<keyword id="KW-0407">Ion channel</keyword>
<keyword id="KW-0406">Ion transport</keyword>
<keyword id="KW-0472">Membrane</keyword>
<keyword id="KW-0812">Transmembrane</keyword>
<keyword id="KW-1133">Transmembrane helix</keyword>
<keyword id="KW-0813">Transport</keyword>
<proteinExistence type="inferred from homology"/>
<name>MSCL_ACIB5</name>
<accession>B7I868</accession>